<accession>B1JU53</accession>
<organism>
    <name type="scientific">Burkholderia orbicola (strain MC0-3)</name>
    <dbReference type="NCBI Taxonomy" id="406425"/>
    <lineage>
        <taxon>Bacteria</taxon>
        <taxon>Pseudomonadati</taxon>
        <taxon>Pseudomonadota</taxon>
        <taxon>Betaproteobacteria</taxon>
        <taxon>Burkholderiales</taxon>
        <taxon>Burkholderiaceae</taxon>
        <taxon>Burkholderia</taxon>
        <taxon>Burkholderia cepacia complex</taxon>
        <taxon>Burkholderia orbicola</taxon>
    </lineage>
</organism>
<keyword id="KW-0131">Cell cycle</keyword>
<keyword id="KW-0132">Cell division</keyword>
<keyword id="KW-0342">GTP-binding</keyword>
<keyword id="KW-0460">Magnesium</keyword>
<keyword id="KW-0479">Metal-binding</keyword>
<keyword id="KW-0547">Nucleotide-binding</keyword>
<keyword id="KW-0717">Septation</keyword>
<reference key="1">
    <citation type="submission" date="2008-02" db="EMBL/GenBank/DDBJ databases">
        <title>Complete sequence of chromosome 1 of Burkholderia cenocepacia MC0-3.</title>
        <authorList>
            <person name="Copeland A."/>
            <person name="Lucas S."/>
            <person name="Lapidus A."/>
            <person name="Barry K."/>
            <person name="Bruce D."/>
            <person name="Goodwin L."/>
            <person name="Glavina del Rio T."/>
            <person name="Dalin E."/>
            <person name="Tice H."/>
            <person name="Pitluck S."/>
            <person name="Chain P."/>
            <person name="Malfatti S."/>
            <person name="Shin M."/>
            <person name="Vergez L."/>
            <person name="Schmutz J."/>
            <person name="Larimer F."/>
            <person name="Land M."/>
            <person name="Hauser L."/>
            <person name="Kyrpides N."/>
            <person name="Mikhailova N."/>
            <person name="Tiedje J."/>
            <person name="Richardson P."/>
        </authorList>
    </citation>
    <scope>NUCLEOTIDE SEQUENCE [LARGE SCALE GENOMIC DNA]</scope>
    <source>
        <strain>MC0-3</strain>
    </source>
</reference>
<sequence>MAFLLHQARFYTTVNHLRDLPPTVQPEIAFAGRSNAGKSTAINVLCNQKRLAFASKTPGRTQHINYFSVGPAAEPVANLVDLPGYGYAEVPGAAKAHWEMLLSSYLATRSQLCGLILMMDSRRPLTDLDRRMIEWFAPTGKPIHTLLTKCDKLTRQESINALRNTQKGLDAYRDQGVKGKLTVQLFSALKRTGLDEAHELIESWLRPSVADEKSEPVAQ</sequence>
<evidence type="ECO:0000255" key="1">
    <source>
        <dbReference type="HAMAP-Rule" id="MF_00321"/>
    </source>
</evidence>
<feature type="chain" id="PRO_1000115955" description="Probable GTP-binding protein EngB">
    <location>
        <begin position="1"/>
        <end position="219"/>
    </location>
</feature>
<feature type="domain" description="EngB-type G" evidence="1">
    <location>
        <begin position="24"/>
        <end position="207"/>
    </location>
</feature>
<feature type="binding site" evidence="1">
    <location>
        <begin position="32"/>
        <end position="39"/>
    </location>
    <ligand>
        <name>GTP</name>
        <dbReference type="ChEBI" id="CHEBI:37565"/>
    </ligand>
</feature>
<feature type="binding site" evidence="1">
    <location>
        <position position="39"/>
    </location>
    <ligand>
        <name>Mg(2+)</name>
        <dbReference type="ChEBI" id="CHEBI:18420"/>
    </ligand>
</feature>
<feature type="binding site" evidence="1">
    <location>
        <begin position="59"/>
        <end position="63"/>
    </location>
    <ligand>
        <name>GTP</name>
        <dbReference type="ChEBI" id="CHEBI:37565"/>
    </ligand>
</feature>
<feature type="binding site" evidence="1">
    <location>
        <position position="61"/>
    </location>
    <ligand>
        <name>Mg(2+)</name>
        <dbReference type="ChEBI" id="CHEBI:18420"/>
    </ligand>
</feature>
<feature type="binding site" evidence="1">
    <location>
        <begin position="81"/>
        <end position="84"/>
    </location>
    <ligand>
        <name>GTP</name>
        <dbReference type="ChEBI" id="CHEBI:37565"/>
    </ligand>
</feature>
<feature type="binding site" evidence="1">
    <location>
        <begin position="148"/>
        <end position="151"/>
    </location>
    <ligand>
        <name>GTP</name>
        <dbReference type="ChEBI" id="CHEBI:37565"/>
    </ligand>
</feature>
<feature type="binding site" evidence="1">
    <location>
        <begin position="186"/>
        <end position="188"/>
    </location>
    <ligand>
        <name>GTP</name>
        <dbReference type="ChEBI" id="CHEBI:37565"/>
    </ligand>
</feature>
<name>ENGB_BURO0</name>
<dbReference type="EMBL" id="CP000958">
    <property type="protein sequence ID" value="ACA89538.1"/>
    <property type="molecule type" value="Genomic_DNA"/>
</dbReference>
<dbReference type="SMR" id="B1JU53"/>
<dbReference type="GeneID" id="83047162"/>
<dbReference type="KEGG" id="bcm:Bcenmc03_0358"/>
<dbReference type="HOGENOM" id="CLU_033732_1_1_4"/>
<dbReference type="Proteomes" id="UP000002169">
    <property type="component" value="Chromosome 1"/>
</dbReference>
<dbReference type="GO" id="GO:0005829">
    <property type="term" value="C:cytosol"/>
    <property type="evidence" value="ECO:0007669"/>
    <property type="project" value="TreeGrafter"/>
</dbReference>
<dbReference type="GO" id="GO:0005525">
    <property type="term" value="F:GTP binding"/>
    <property type="evidence" value="ECO:0007669"/>
    <property type="project" value="UniProtKB-UniRule"/>
</dbReference>
<dbReference type="GO" id="GO:0046872">
    <property type="term" value="F:metal ion binding"/>
    <property type="evidence" value="ECO:0007669"/>
    <property type="project" value="UniProtKB-KW"/>
</dbReference>
<dbReference type="GO" id="GO:0000917">
    <property type="term" value="P:division septum assembly"/>
    <property type="evidence" value="ECO:0007669"/>
    <property type="project" value="UniProtKB-KW"/>
</dbReference>
<dbReference type="CDD" id="cd01876">
    <property type="entry name" value="YihA_EngB"/>
    <property type="match status" value="1"/>
</dbReference>
<dbReference type="FunFam" id="3.40.50.300:FF:000098">
    <property type="entry name" value="Probable GTP-binding protein EngB"/>
    <property type="match status" value="1"/>
</dbReference>
<dbReference type="Gene3D" id="3.40.50.300">
    <property type="entry name" value="P-loop containing nucleotide triphosphate hydrolases"/>
    <property type="match status" value="1"/>
</dbReference>
<dbReference type="HAMAP" id="MF_00321">
    <property type="entry name" value="GTPase_EngB"/>
    <property type="match status" value="1"/>
</dbReference>
<dbReference type="InterPro" id="IPR030393">
    <property type="entry name" value="G_ENGB_dom"/>
</dbReference>
<dbReference type="InterPro" id="IPR006073">
    <property type="entry name" value="GTP-bd"/>
</dbReference>
<dbReference type="InterPro" id="IPR019987">
    <property type="entry name" value="GTP-bd_ribosome_bio_YsxC"/>
</dbReference>
<dbReference type="InterPro" id="IPR027417">
    <property type="entry name" value="P-loop_NTPase"/>
</dbReference>
<dbReference type="NCBIfam" id="TIGR03598">
    <property type="entry name" value="GTPase_YsxC"/>
    <property type="match status" value="1"/>
</dbReference>
<dbReference type="PANTHER" id="PTHR11649:SF13">
    <property type="entry name" value="ENGB-TYPE G DOMAIN-CONTAINING PROTEIN"/>
    <property type="match status" value="1"/>
</dbReference>
<dbReference type="PANTHER" id="PTHR11649">
    <property type="entry name" value="MSS1/TRME-RELATED GTP-BINDING PROTEIN"/>
    <property type="match status" value="1"/>
</dbReference>
<dbReference type="Pfam" id="PF01926">
    <property type="entry name" value="MMR_HSR1"/>
    <property type="match status" value="1"/>
</dbReference>
<dbReference type="SUPFAM" id="SSF52540">
    <property type="entry name" value="P-loop containing nucleoside triphosphate hydrolases"/>
    <property type="match status" value="1"/>
</dbReference>
<dbReference type="PROSITE" id="PS51706">
    <property type="entry name" value="G_ENGB"/>
    <property type="match status" value="1"/>
</dbReference>
<protein>
    <recommendedName>
        <fullName evidence="1">Probable GTP-binding protein EngB</fullName>
    </recommendedName>
</protein>
<gene>
    <name evidence="1" type="primary">engB</name>
    <name type="ordered locus">Bcenmc03_0358</name>
</gene>
<comment type="function">
    <text evidence="1">Necessary for normal cell division and for the maintenance of normal septation.</text>
</comment>
<comment type="cofactor">
    <cofactor evidence="1">
        <name>Mg(2+)</name>
        <dbReference type="ChEBI" id="CHEBI:18420"/>
    </cofactor>
</comment>
<comment type="similarity">
    <text evidence="1">Belongs to the TRAFAC class TrmE-Era-EngA-EngB-Septin-like GTPase superfamily. EngB GTPase family.</text>
</comment>
<proteinExistence type="inferred from homology"/>